<proteinExistence type="inferred from homology"/>
<reference key="1">
    <citation type="book" date="2006" name="Gram positive pathogens, 2nd edition">
        <title>The Staphylococcus aureus NCTC 8325 genome.</title>
        <editorList>
            <person name="Fischetti V."/>
            <person name="Novick R."/>
            <person name="Ferretti J."/>
            <person name="Portnoy D."/>
            <person name="Rood J."/>
        </editorList>
        <authorList>
            <person name="Gillaspy A.F."/>
            <person name="Worrell V."/>
            <person name="Orvis J."/>
            <person name="Roe B.A."/>
            <person name="Dyer D.W."/>
            <person name="Iandolo J.J."/>
        </authorList>
    </citation>
    <scope>NUCLEOTIDE SEQUENCE [LARGE SCALE GENOMIC DNA]</scope>
    <source>
        <strain>NCTC 8325 / PS 47</strain>
    </source>
</reference>
<protein>
    <recommendedName>
        <fullName evidence="1">Methylenetetrahydrofolate--tRNA-(uracil-5-)-methyltransferase TrmFO</fullName>
        <ecNumber evidence="1">2.1.1.74</ecNumber>
    </recommendedName>
    <alternativeName>
        <fullName evidence="1">Folate-dependent tRNA (uracil-5-)-methyltransferase</fullName>
    </alternativeName>
    <alternativeName>
        <fullName evidence="1">Folate-dependent tRNA(M-5-U54)-methyltransferase</fullName>
    </alternativeName>
</protein>
<organism>
    <name type="scientific">Staphylococcus aureus (strain NCTC 8325 / PS 47)</name>
    <dbReference type="NCBI Taxonomy" id="93061"/>
    <lineage>
        <taxon>Bacteria</taxon>
        <taxon>Bacillati</taxon>
        <taxon>Bacillota</taxon>
        <taxon>Bacilli</taxon>
        <taxon>Bacillales</taxon>
        <taxon>Staphylococcaceae</taxon>
        <taxon>Staphylococcus</taxon>
    </lineage>
</organism>
<comment type="function">
    <text evidence="1">Catalyzes the folate-dependent formation of 5-methyl-uridine at position 54 (M-5-U54) in all tRNAs.</text>
</comment>
<comment type="catalytic activity">
    <reaction evidence="1">
        <text>uridine(54) in tRNA + (6R)-5,10-methylene-5,6,7,8-tetrahydrofolate + NADH + H(+) = 5-methyluridine(54) in tRNA + (6S)-5,6,7,8-tetrahydrofolate + NAD(+)</text>
        <dbReference type="Rhea" id="RHEA:16873"/>
        <dbReference type="Rhea" id="RHEA-COMP:10167"/>
        <dbReference type="Rhea" id="RHEA-COMP:10193"/>
        <dbReference type="ChEBI" id="CHEBI:15378"/>
        <dbReference type="ChEBI" id="CHEBI:15636"/>
        <dbReference type="ChEBI" id="CHEBI:57453"/>
        <dbReference type="ChEBI" id="CHEBI:57540"/>
        <dbReference type="ChEBI" id="CHEBI:57945"/>
        <dbReference type="ChEBI" id="CHEBI:65315"/>
        <dbReference type="ChEBI" id="CHEBI:74447"/>
        <dbReference type="EC" id="2.1.1.74"/>
    </reaction>
</comment>
<comment type="catalytic activity">
    <reaction evidence="1">
        <text>uridine(54) in tRNA + (6R)-5,10-methylene-5,6,7,8-tetrahydrofolate + NADPH + H(+) = 5-methyluridine(54) in tRNA + (6S)-5,6,7,8-tetrahydrofolate + NADP(+)</text>
        <dbReference type="Rhea" id="RHEA:62372"/>
        <dbReference type="Rhea" id="RHEA-COMP:10167"/>
        <dbReference type="Rhea" id="RHEA-COMP:10193"/>
        <dbReference type="ChEBI" id="CHEBI:15378"/>
        <dbReference type="ChEBI" id="CHEBI:15636"/>
        <dbReference type="ChEBI" id="CHEBI:57453"/>
        <dbReference type="ChEBI" id="CHEBI:57783"/>
        <dbReference type="ChEBI" id="CHEBI:58349"/>
        <dbReference type="ChEBI" id="CHEBI:65315"/>
        <dbReference type="ChEBI" id="CHEBI:74447"/>
        <dbReference type="EC" id="2.1.1.74"/>
    </reaction>
</comment>
<comment type="cofactor">
    <cofactor evidence="1">
        <name>FAD</name>
        <dbReference type="ChEBI" id="CHEBI:57692"/>
    </cofactor>
</comment>
<comment type="subcellular location">
    <subcellularLocation>
        <location evidence="1">Cytoplasm</location>
    </subcellularLocation>
</comment>
<comment type="similarity">
    <text evidence="1">Belongs to the MnmG family. TrmFO subfamily.</text>
</comment>
<name>TRMFO_STAA8</name>
<gene>
    <name evidence="1" type="primary">trmFO</name>
    <name type="synonym">gid</name>
    <name type="ordered locus">SAOUHSC_01223</name>
</gene>
<feature type="chain" id="PRO_1000063932" description="Methylenetetrahydrofolate--tRNA-(uracil-5-)-methyltransferase TrmFO">
    <location>
        <begin position="1"/>
        <end position="435"/>
    </location>
</feature>
<feature type="binding site" evidence="1">
    <location>
        <begin position="9"/>
        <end position="14"/>
    </location>
    <ligand>
        <name>FAD</name>
        <dbReference type="ChEBI" id="CHEBI:57692"/>
    </ligand>
</feature>
<accession>Q2FZ31</accession>
<evidence type="ECO:0000255" key="1">
    <source>
        <dbReference type="HAMAP-Rule" id="MF_01037"/>
    </source>
</evidence>
<dbReference type="EC" id="2.1.1.74" evidence="1"/>
<dbReference type="EMBL" id="CP000253">
    <property type="protein sequence ID" value="ABD30327.1"/>
    <property type="molecule type" value="Genomic_DNA"/>
</dbReference>
<dbReference type="RefSeq" id="WP_000195254.1">
    <property type="nucleotide sequence ID" value="NZ_LS483365.1"/>
</dbReference>
<dbReference type="RefSeq" id="YP_499759.1">
    <property type="nucleotide sequence ID" value="NC_007795.1"/>
</dbReference>
<dbReference type="SMR" id="Q2FZ31"/>
<dbReference type="STRING" id="93061.SAOUHSC_01223"/>
<dbReference type="PaxDb" id="1280-SAXN108_1253"/>
<dbReference type="GeneID" id="3920251"/>
<dbReference type="KEGG" id="sao:SAOUHSC_01223"/>
<dbReference type="PATRIC" id="fig|93061.5.peg.1121"/>
<dbReference type="eggNOG" id="COG1206">
    <property type="taxonomic scope" value="Bacteria"/>
</dbReference>
<dbReference type="HOGENOM" id="CLU_033057_1_0_9"/>
<dbReference type="OrthoDB" id="9803114at2"/>
<dbReference type="PRO" id="PR:Q2FZ31"/>
<dbReference type="Proteomes" id="UP000008816">
    <property type="component" value="Chromosome"/>
</dbReference>
<dbReference type="GO" id="GO:0005829">
    <property type="term" value="C:cytosol"/>
    <property type="evidence" value="ECO:0000318"/>
    <property type="project" value="GO_Central"/>
</dbReference>
<dbReference type="GO" id="GO:0050660">
    <property type="term" value="F:flavin adenine dinucleotide binding"/>
    <property type="evidence" value="ECO:0000318"/>
    <property type="project" value="GO_Central"/>
</dbReference>
<dbReference type="GO" id="GO:0047151">
    <property type="term" value="F:tRNA (uracil(54)-C5)-methyltransferase activity, 5,10-methylenetetrahydrofolate-dependent"/>
    <property type="evidence" value="ECO:0007669"/>
    <property type="project" value="UniProtKB-UniRule"/>
</dbReference>
<dbReference type="GO" id="GO:0030488">
    <property type="term" value="P:tRNA methylation"/>
    <property type="evidence" value="ECO:0000318"/>
    <property type="project" value="GO_Central"/>
</dbReference>
<dbReference type="GO" id="GO:0002098">
    <property type="term" value="P:tRNA wobble uridine modification"/>
    <property type="evidence" value="ECO:0000318"/>
    <property type="project" value="GO_Central"/>
</dbReference>
<dbReference type="FunFam" id="3.50.50.60:FF:000035">
    <property type="entry name" value="Methylenetetrahydrofolate--tRNA-(uracil-5-)-methyltransferase TrmFO"/>
    <property type="match status" value="1"/>
</dbReference>
<dbReference type="FunFam" id="3.50.50.60:FF:000040">
    <property type="entry name" value="Methylenetetrahydrofolate--tRNA-(uracil-5-)-methyltransferase TrmFO"/>
    <property type="match status" value="1"/>
</dbReference>
<dbReference type="Gene3D" id="3.50.50.60">
    <property type="entry name" value="FAD/NAD(P)-binding domain"/>
    <property type="match status" value="2"/>
</dbReference>
<dbReference type="HAMAP" id="MF_01037">
    <property type="entry name" value="TrmFO"/>
    <property type="match status" value="1"/>
</dbReference>
<dbReference type="InterPro" id="IPR036188">
    <property type="entry name" value="FAD/NAD-bd_sf"/>
</dbReference>
<dbReference type="InterPro" id="IPR002218">
    <property type="entry name" value="MnmG-rel"/>
</dbReference>
<dbReference type="InterPro" id="IPR020595">
    <property type="entry name" value="MnmG-rel_CS"/>
</dbReference>
<dbReference type="InterPro" id="IPR040131">
    <property type="entry name" value="MnmG_N"/>
</dbReference>
<dbReference type="InterPro" id="IPR004417">
    <property type="entry name" value="TrmFO"/>
</dbReference>
<dbReference type="NCBIfam" id="TIGR00137">
    <property type="entry name" value="gid_trmFO"/>
    <property type="match status" value="1"/>
</dbReference>
<dbReference type="NCBIfam" id="NF003739">
    <property type="entry name" value="PRK05335.1"/>
    <property type="match status" value="1"/>
</dbReference>
<dbReference type="PANTHER" id="PTHR11806">
    <property type="entry name" value="GLUCOSE INHIBITED DIVISION PROTEIN A"/>
    <property type="match status" value="1"/>
</dbReference>
<dbReference type="PANTHER" id="PTHR11806:SF2">
    <property type="entry name" value="METHYLENETETRAHYDROFOLATE--TRNA-(URACIL-5-)-METHYLTRANSFERASE TRMFO"/>
    <property type="match status" value="1"/>
</dbReference>
<dbReference type="Pfam" id="PF01134">
    <property type="entry name" value="GIDA"/>
    <property type="match status" value="1"/>
</dbReference>
<dbReference type="SUPFAM" id="SSF51905">
    <property type="entry name" value="FAD/NAD(P)-binding domain"/>
    <property type="match status" value="1"/>
</dbReference>
<dbReference type="PROSITE" id="PS01281">
    <property type="entry name" value="GIDA_2"/>
    <property type="match status" value="1"/>
</dbReference>
<sequence>MTQTVNVIGAGLAGSEAAYQLAERGIKVNLIEMRPVKQTPAHHTDKFAELVCSNSLRGNALTNGVGVLKEEMRRLNSIIIEAADKARVPAGGALAVDRHDFSGYITETLKNHENITVINEEINAIPDGYTIIATGPLTTETLAQEIVDITGKDQLYFYDAAAPIIEKESIDMDKVYLKSRYDKGEAAYLNCPMTEDEFNRFYDAVLEAEVAPVNSFEKEKYFEGCMPFEVMAERGRKTLLFGPMKPVGLEDPKTGKRPYAVVQLRQDDAAGTLYNIVGFQTHLKWGAQKEVIKLIPGLENVDIVRYGVMHRNTFINSPDVLNEKYELISQPNIQFAGQMTGVEGYVESAASGLVAGINLAHKILGKGEVVFPRETMIGSMAYYISHAKNNKNFQPMNANFGLLPSLETRIKDKKERYEAQANRALDYLENFKKTL</sequence>
<keyword id="KW-0963">Cytoplasm</keyword>
<keyword id="KW-0274">FAD</keyword>
<keyword id="KW-0285">Flavoprotein</keyword>
<keyword id="KW-0489">Methyltransferase</keyword>
<keyword id="KW-0520">NAD</keyword>
<keyword id="KW-0521">NADP</keyword>
<keyword id="KW-1185">Reference proteome</keyword>
<keyword id="KW-0808">Transferase</keyword>
<keyword id="KW-0819">tRNA processing</keyword>